<keyword id="KW-0963">Cytoplasm</keyword>
<keyword id="KW-0274">FAD</keyword>
<keyword id="KW-0285">Flavoprotein</keyword>
<keyword id="KW-0489">Methyltransferase</keyword>
<keyword id="KW-0520">NAD</keyword>
<keyword id="KW-0521">NADP</keyword>
<keyword id="KW-1185">Reference proteome</keyword>
<keyword id="KW-0808">Transferase</keyword>
<keyword id="KW-0819">tRNA processing</keyword>
<accession>Q312C5</accession>
<comment type="function">
    <text evidence="1">Catalyzes the folate-dependent formation of 5-methyl-uridine at position 54 (M-5-U54) in all tRNAs.</text>
</comment>
<comment type="catalytic activity">
    <reaction evidence="1">
        <text>uridine(54) in tRNA + (6R)-5,10-methylene-5,6,7,8-tetrahydrofolate + NADH + H(+) = 5-methyluridine(54) in tRNA + (6S)-5,6,7,8-tetrahydrofolate + NAD(+)</text>
        <dbReference type="Rhea" id="RHEA:16873"/>
        <dbReference type="Rhea" id="RHEA-COMP:10167"/>
        <dbReference type="Rhea" id="RHEA-COMP:10193"/>
        <dbReference type="ChEBI" id="CHEBI:15378"/>
        <dbReference type="ChEBI" id="CHEBI:15636"/>
        <dbReference type="ChEBI" id="CHEBI:57453"/>
        <dbReference type="ChEBI" id="CHEBI:57540"/>
        <dbReference type="ChEBI" id="CHEBI:57945"/>
        <dbReference type="ChEBI" id="CHEBI:65315"/>
        <dbReference type="ChEBI" id="CHEBI:74447"/>
        <dbReference type="EC" id="2.1.1.74"/>
    </reaction>
</comment>
<comment type="catalytic activity">
    <reaction evidence="1">
        <text>uridine(54) in tRNA + (6R)-5,10-methylene-5,6,7,8-tetrahydrofolate + NADPH + H(+) = 5-methyluridine(54) in tRNA + (6S)-5,6,7,8-tetrahydrofolate + NADP(+)</text>
        <dbReference type="Rhea" id="RHEA:62372"/>
        <dbReference type="Rhea" id="RHEA-COMP:10167"/>
        <dbReference type="Rhea" id="RHEA-COMP:10193"/>
        <dbReference type="ChEBI" id="CHEBI:15378"/>
        <dbReference type="ChEBI" id="CHEBI:15636"/>
        <dbReference type="ChEBI" id="CHEBI:57453"/>
        <dbReference type="ChEBI" id="CHEBI:57783"/>
        <dbReference type="ChEBI" id="CHEBI:58349"/>
        <dbReference type="ChEBI" id="CHEBI:65315"/>
        <dbReference type="ChEBI" id="CHEBI:74447"/>
        <dbReference type="EC" id="2.1.1.74"/>
    </reaction>
</comment>
<comment type="cofactor">
    <cofactor evidence="1">
        <name>FAD</name>
        <dbReference type="ChEBI" id="CHEBI:57692"/>
    </cofactor>
</comment>
<comment type="subcellular location">
    <subcellularLocation>
        <location evidence="1">Cytoplasm</location>
    </subcellularLocation>
</comment>
<comment type="similarity">
    <text evidence="1">Belongs to the MnmG family. TrmFO subfamily.</text>
</comment>
<dbReference type="EC" id="2.1.1.74" evidence="1"/>
<dbReference type="EMBL" id="CP000112">
    <property type="protein sequence ID" value="ABB38221.2"/>
    <property type="molecule type" value="Genomic_DNA"/>
</dbReference>
<dbReference type="RefSeq" id="WP_011367391.1">
    <property type="nucleotide sequence ID" value="NC_007519.1"/>
</dbReference>
<dbReference type="SMR" id="Q312C5"/>
<dbReference type="STRING" id="207559.Dde_1422"/>
<dbReference type="DNASU" id="3756131"/>
<dbReference type="KEGG" id="dde:Dde_1422"/>
<dbReference type="eggNOG" id="COG1206">
    <property type="taxonomic scope" value="Bacteria"/>
</dbReference>
<dbReference type="HOGENOM" id="CLU_033057_1_0_7"/>
<dbReference type="Proteomes" id="UP000002710">
    <property type="component" value="Chromosome"/>
</dbReference>
<dbReference type="GO" id="GO:0005829">
    <property type="term" value="C:cytosol"/>
    <property type="evidence" value="ECO:0007669"/>
    <property type="project" value="TreeGrafter"/>
</dbReference>
<dbReference type="GO" id="GO:0050660">
    <property type="term" value="F:flavin adenine dinucleotide binding"/>
    <property type="evidence" value="ECO:0007669"/>
    <property type="project" value="UniProtKB-UniRule"/>
</dbReference>
<dbReference type="GO" id="GO:0047151">
    <property type="term" value="F:tRNA (uracil(54)-C5)-methyltransferase activity, 5,10-methylenetetrahydrofolate-dependent"/>
    <property type="evidence" value="ECO:0007669"/>
    <property type="project" value="UniProtKB-UniRule"/>
</dbReference>
<dbReference type="GO" id="GO:0030488">
    <property type="term" value="P:tRNA methylation"/>
    <property type="evidence" value="ECO:0007669"/>
    <property type="project" value="TreeGrafter"/>
</dbReference>
<dbReference type="GO" id="GO:0002098">
    <property type="term" value="P:tRNA wobble uridine modification"/>
    <property type="evidence" value="ECO:0007669"/>
    <property type="project" value="TreeGrafter"/>
</dbReference>
<dbReference type="Gene3D" id="3.50.50.60">
    <property type="entry name" value="FAD/NAD(P)-binding domain"/>
    <property type="match status" value="2"/>
</dbReference>
<dbReference type="HAMAP" id="MF_01037">
    <property type="entry name" value="TrmFO"/>
    <property type="match status" value="1"/>
</dbReference>
<dbReference type="InterPro" id="IPR036188">
    <property type="entry name" value="FAD/NAD-bd_sf"/>
</dbReference>
<dbReference type="InterPro" id="IPR002218">
    <property type="entry name" value="MnmG-rel"/>
</dbReference>
<dbReference type="InterPro" id="IPR040131">
    <property type="entry name" value="MnmG_N"/>
</dbReference>
<dbReference type="InterPro" id="IPR004417">
    <property type="entry name" value="TrmFO"/>
</dbReference>
<dbReference type="NCBIfam" id="TIGR00137">
    <property type="entry name" value="gid_trmFO"/>
    <property type="match status" value="1"/>
</dbReference>
<dbReference type="NCBIfam" id="NF003739">
    <property type="entry name" value="PRK05335.1"/>
    <property type="match status" value="1"/>
</dbReference>
<dbReference type="PANTHER" id="PTHR11806">
    <property type="entry name" value="GLUCOSE INHIBITED DIVISION PROTEIN A"/>
    <property type="match status" value="1"/>
</dbReference>
<dbReference type="PANTHER" id="PTHR11806:SF2">
    <property type="entry name" value="METHYLENETETRAHYDROFOLATE--TRNA-(URACIL-5-)-METHYLTRANSFERASE TRMFO"/>
    <property type="match status" value="1"/>
</dbReference>
<dbReference type="Pfam" id="PF01134">
    <property type="entry name" value="GIDA"/>
    <property type="match status" value="1"/>
</dbReference>
<dbReference type="SUPFAM" id="SSF51905">
    <property type="entry name" value="FAD/NAD(P)-binding domain"/>
    <property type="match status" value="1"/>
</dbReference>
<feature type="chain" id="PRO_0000346335" description="Methylenetetrahydrofolate--tRNA-(uracil-5-)-methyltransferase TrmFO">
    <location>
        <begin position="1"/>
        <end position="446"/>
    </location>
</feature>
<feature type="binding site" evidence="1">
    <location>
        <begin position="11"/>
        <end position="16"/>
    </location>
    <ligand>
        <name>FAD</name>
        <dbReference type="ChEBI" id="CHEBI:57692"/>
    </ligand>
</feature>
<evidence type="ECO:0000255" key="1">
    <source>
        <dbReference type="HAMAP-Rule" id="MF_01037"/>
    </source>
</evidence>
<protein>
    <recommendedName>
        <fullName evidence="1">Methylenetetrahydrofolate--tRNA-(uracil-5-)-methyltransferase TrmFO</fullName>
        <ecNumber evidence="1">2.1.1.74</ecNumber>
    </recommendedName>
    <alternativeName>
        <fullName evidence="1">Folate-dependent tRNA (uracil-5-)-methyltransferase</fullName>
    </alternativeName>
    <alternativeName>
        <fullName evidence="1">Folate-dependent tRNA(M-5-U54)-methyltransferase</fullName>
    </alternativeName>
</protein>
<organism>
    <name type="scientific">Oleidesulfovibrio alaskensis (strain ATCC BAA-1058 / DSM 17464 / G20)</name>
    <name type="common">Desulfovibrio alaskensis</name>
    <dbReference type="NCBI Taxonomy" id="207559"/>
    <lineage>
        <taxon>Bacteria</taxon>
        <taxon>Pseudomonadati</taxon>
        <taxon>Thermodesulfobacteriota</taxon>
        <taxon>Desulfovibrionia</taxon>
        <taxon>Desulfovibrionales</taxon>
        <taxon>Desulfovibrionaceae</taxon>
        <taxon>Oleidesulfovibrio</taxon>
    </lineage>
</organism>
<reference key="1">
    <citation type="journal article" date="2011" name="J. Bacteriol.">
        <title>Complete genome sequence and updated annotation of Desulfovibrio alaskensis G20.</title>
        <authorList>
            <person name="Hauser L.J."/>
            <person name="Land M.L."/>
            <person name="Brown S.D."/>
            <person name="Larimer F."/>
            <person name="Keller K.L."/>
            <person name="Rapp-Giles B.J."/>
            <person name="Price M.N."/>
            <person name="Lin M."/>
            <person name="Bruce D.C."/>
            <person name="Detter J.C."/>
            <person name="Tapia R."/>
            <person name="Han C.S."/>
            <person name="Goodwin L.A."/>
            <person name="Cheng J.F."/>
            <person name="Pitluck S."/>
            <person name="Copeland A."/>
            <person name="Lucas S."/>
            <person name="Nolan M."/>
            <person name="Lapidus A.L."/>
            <person name="Palumbo A.V."/>
            <person name="Wall J.D."/>
        </authorList>
    </citation>
    <scope>NUCLEOTIDE SEQUENCE [LARGE SCALE GENOMIC DNA]</scope>
    <source>
        <strain>ATCC BAA-1058 / DSM 17464 / G20</strain>
    </source>
</reference>
<proteinExistence type="inferred from homology"/>
<name>TRMFO_OLEA2</name>
<gene>
    <name evidence="1" type="primary">trmFO</name>
    <name type="ordered locus">Dde_1422</name>
</gene>
<sequence length="446" mass="48622">MTALTSAAIVGGGLAGCECARKLARAGIAVTLFEMKPHSFSPAHSSPELGELVCSNSLRSDEPEAGVGVLKQEMRALGSLVMEVAEATRVPAGKALAVDRGLFAASMTAAMEAEPGITLIRREITSLDDPALQGFDAVVIAAGPVASESLSRSLADAVGATHLYFYDAIAPIISADSVNMEKAFWGSRYRPEDTDYLNCPMNREEYFAFREALVEGEKAATKDFEKELHFEGCMPIEALAERGEMTLAFGPFKPVGLDDPRTGRRPFAVVQLRTENLNKTMFNLVGCQTKLKYGEQDRIFRMIPGLEDAEFVRYGSVHRNTYVNAPQVLNGDQSLKNRPDVFLAGQITGVEGYVESAANGMWLGMMLAARKHGENIPQPPVECALGALAAHLRTPVKKFQPSNINFGLTPELNQRARKKDRKALYAERARENFTQWYALLPASARS</sequence>